<feature type="chain" id="PRO_1000005278" description="Small ribosomal subunit protein bS6">
    <location>
        <begin position="1"/>
        <end position="122"/>
    </location>
</feature>
<feature type="region of interest" description="Disordered" evidence="2">
    <location>
        <begin position="97"/>
        <end position="122"/>
    </location>
</feature>
<feature type="compositionally biased region" description="Basic and acidic residues" evidence="2">
    <location>
        <begin position="106"/>
        <end position="122"/>
    </location>
</feature>
<accession>A6SXJ4</accession>
<keyword id="KW-0687">Ribonucleoprotein</keyword>
<keyword id="KW-0689">Ribosomal protein</keyword>
<keyword id="KW-0694">RNA-binding</keyword>
<keyword id="KW-0699">rRNA-binding</keyword>
<protein>
    <recommendedName>
        <fullName evidence="1">Small ribosomal subunit protein bS6</fullName>
    </recommendedName>
    <alternativeName>
        <fullName evidence="3">30S ribosomal protein S6</fullName>
    </alternativeName>
</protein>
<proteinExistence type="inferred from homology"/>
<organism>
    <name type="scientific">Janthinobacterium sp. (strain Marseille)</name>
    <name type="common">Minibacterium massiliensis</name>
    <dbReference type="NCBI Taxonomy" id="375286"/>
    <lineage>
        <taxon>Bacteria</taxon>
        <taxon>Pseudomonadati</taxon>
        <taxon>Pseudomonadota</taxon>
        <taxon>Betaproteobacteria</taxon>
        <taxon>Burkholderiales</taxon>
        <taxon>Oxalobacteraceae</taxon>
        <taxon>Janthinobacterium</taxon>
    </lineage>
</organism>
<evidence type="ECO:0000255" key="1">
    <source>
        <dbReference type="HAMAP-Rule" id="MF_00360"/>
    </source>
</evidence>
<evidence type="ECO:0000256" key="2">
    <source>
        <dbReference type="SAM" id="MobiDB-lite"/>
    </source>
</evidence>
<evidence type="ECO:0000305" key="3"/>
<reference key="1">
    <citation type="journal article" date="2007" name="PLoS Genet.">
        <title>Genome analysis of Minibacterium massiliensis highlights the convergent evolution of water-living bacteria.</title>
        <authorList>
            <person name="Audic S."/>
            <person name="Robert C."/>
            <person name="Campagna B."/>
            <person name="Parinello H."/>
            <person name="Claverie J.-M."/>
            <person name="Raoult D."/>
            <person name="Drancourt M."/>
        </authorList>
    </citation>
    <scope>NUCLEOTIDE SEQUENCE [LARGE SCALE GENOMIC DNA]</scope>
    <source>
        <strain>Marseille</strain>
    </source>
</reference>
<name>RS6_JANMA</name>
<dbReference type="EMBL" id="CP000269">
    <property type="protein sequence ID" value="ABR90148.1"/>
    <property type="molecule type" value="Genomic_DNA"/>
</dbReference>
<dbReference type="RefSeq" id="WP_012079158.1">
    <property type="nucleotide sequence ID" value="NC_009659.1"/>
</dbReference>
<dbReference type="SMR" id="A6SXJ4"/>
<dbReference type="STRING" id="375286.mma_1301"/>
<dbReference type="KEGG" id="mms:mma_1301"/>
<dbReference type="eggNOG" id="COG0360">
    <property type="taxonomic scope" value="Bacteria"/>
</dbReference>
<dbReference type="HOGENOM" id="CLU_113441_6_1_4"/>
<dbReference type="OrthoDB" id="9812702at2"/>
<dbReference type="Proteomes" id="UP000006388">
    <property type="component" value="Chromosome"/>
</dbReference>
<dbReference type="GO" id="GO:0022627">
    <property type="term" value="C:cytosolic small ribosomal subunit"/>
    <property type="evidence" value="ECO:0007669"/>
    <property type="project" value="TreeGrafter"/>
</dbReference>
<dbReference type="GO" id="GO:0070181">
    <property type="term" value="F:small ribosomal subunit rRNA binding"/>
    <property type="evidence" value="ECO:0007669"/>
    <property type="project" value="TreeGrafter"/>
</dbReference>
<dbReference type="GO" id="GO:0003735">
    <property type="term" value="F:structural constituent of ribosome"/>
    <property type="evidence" value="ECO:0007669"/>
    <property type="project" value="InterPro"/>
</dbReference>
<dbReference type="GO" id="GO:0006412">
    <property type="term" value="P:translation"/>
    <property type="evidence" value="ECO:0007669"/>
    <property type="project" value="UniProtKB-UniRule"/>
</dbReference>
<dbReference type="CDD" id="cd00473">
    <property type="entry name" value="bS6"/>
    <property type="match status" value="1"/>
</dbReference>
<dbReference type="Gene3D" id="3.30.70.60">
    <property type="match status" value="1"/>
</dbReference>
<dbReference type="HAMAP" id="MF_00360">
    <property type="entry name" value="Ribosomal_bS6"/>
    <property type="match status" value="1"/>
</dbReference>
<dbReference type="InterPro" id="IPR000529">
    <property type="entry name" value="Ribosomal_bS6"/>
</dbReference>
<dbReference type="InterPro" id="IPR035980">
    <property type="entry name" value="Ribosomal_bS6_sf"/>
</dbReference>
<dbReference type="InterPro" id="IPR020814">
    <property type="entry name" value="Ribosomal_S6_plastid/chlpt"/>
</dbReference>
<dbReference type="InterPro" id="IPR014717">
    <property type="entry name" value="Transl_elong_EF1B/ribsomal_bS6"/>
</dbReference>
<dbReference type="NCBIfam" id="TIGR00166">
    <property type="entry name" value="S6"/>
    <property type="match status" value="1"/>
</dbReference>
<dbReference type="PANTHER" id="PTHR21011">
    <property type="entry name" value="MITOCHONDRIAL 28S RIBOSOMAL PROTEIN S6"/>
    <property type="match status" value="1"/>
</dbReference>
<dbReference type="PANTHER" id="PTHR21011:SF1">
    <property type="entry name" value="SMALL RIBOSOMAL SUBUNIT PROTEIN BS6M"/>
    <property type="match status" value="1"/>
</dbReference>
<dbReference type="Pfam" id="PF01250">
    <property type="entry name" value="Ribosomal_S6"/>
    <property type="match status" value="1"/>
</dbReference>
<dbReference type="SUPFAM" id="SSF54995">
    <property type="entry name" value="Ribosomal protein S6"/>
    <property type="match status" value="1"/>
</dbReference>
<gene>
    <name evidence="1" type="primary">rpsF</name>
    <name type="ordered locus">mma_1301</name>
</gene>
<sequence length="122" mass="13836">MRHYEIVFIVHPDQSEQVPAMIERYKGIVTARGGVIHRVEDWGRRQMAYMIQKLAKAHYVCLNIECDGETLAEIETGFKFNDAVLRHLTVKMKKAETAPSPMMKAVQKEDAAKSHRAEAPAA</sequence>
<comment type="function">
    <text evidence="1">Binds together with bS18 to 16S ribosomal RNA.</text>
</comment>
<comment type="similarity">
    <text evidence="1">Belongs to the bacterial ribosomal protein bS6 family.</text>
</comment>